<accession>B0BWC2</accession>
<evidence type="ECO:0000255" key="1">
    <source>
        <dbReference type="HAMAP-Rule" id="MF_00121"/>
    </source>
</evidence>
<feature type="chain" id="PRO_1000076168" description="Aspartyl/glutamyl-tRNA(Asn/Gln) amidotransferase subunit B">
    <location>
        <begin position="1"/>
        <end position="483"/>
    </location>
</feature>
<protein>
    <recommendedName>
        <fullName evidence="1">Aspartyl/glutamyl-tRNA(Asn/Gln) amidotransferase subunit B</fullName>
        <shortName evidence="1">Asp/Glu-ADT subunit B</shortName>
        <ecNumber evidence="1">6.3.5.-</ecNumber>
    </recommendedName>
</protein>
<reference key="1">
    <citation type="journal article" date="2008" name="Infect. Immun.">
        <title>Genomic comparison of virulent Rickettsia rickettsii Sheila Smith and avirulent Rickettsia rickettsii Iowa.</title>
        <authorList>
            <person name="Ellison D.W."/>
            <person name="Clark T.R."/>
            <person name="Sturdevant D.E."/>
            <person name="Virtaneva K."/>
            <person name="Porcella S.F."/>
            <person name="Hackstadt T."/>
        </authorList>
    </citation>
    <scope>NUCLEOTIDE SEQUENCE [LARGE SCALE GENOMIC DNA]</scope>
    <source>
        <strain>Iowa</strain>
    </source>
</reference>
<dbReference type="EC" id="6.3.5.-" evidence="1"/>
<dbReference type="EMBL" id="CP000766">
    <property type="protein sequence ID" value="ABY72148.1"/>
    <property type="molecule type" value="Genomic_DNA"/>
</dbReference>
<dbReference type="RefSeq" id="WP_012262230.1">
    <property type="nucleotide sequence ID" value="NC_010263.3"/>
</dbReference>
<dbReference type="SMR" id="B0BWC2"/>
<dbReference type="KEGG" id="rrj:RrIowa_0236"/>
<dbReference type="eggNOG" id="COG0064">
    <property type="taxonomic scope" value="Bacteria"/>
</dbReference>
<dbReference type="HOGENOM" id="CLU_019240_0_0_5"/>
<dbReference type="Proteomes" id="UP000000796">
    <property type="component" value="Chromosome"/>
</dbReference>
<dbReference type="GO" id="GO:0050566">
    <property type="term" value="F:asparaginyl-tRNA synthase (glutamine-hydrolyzing) activity"/>
    <property type="evidence" value="ECO:0007669"/>
    <property type="project" value="RHEA"/>
</dbReference>
<dbReference type="GO" id="GO:0005524">
    <property type="term" value="F:ATP binding"/>
    <property type="evidence" value="ECO:0007669"/>
    <property type="project" value="UniProtKB-KW"/>
</dbReference>
<dbReference type="GO" id="GO:0050567">
    <property type="term" value="F:glutaminyl-tRNA synthase (glutamine-hydrolyzing) activity"/>
    <property type="evidence" value="ECO:0007669"/>
    <property type="project" value="UniProtKB-UniRule"/>
</dbReference>
<dbReference type="GO" id="GO:0070681">
    <property type="term" value="P:glutaminyl-tRNAGln biosynthesis via transamidation"/>
    <property type="evidence" value="ECO:0007669"/>
    <property type="project" value="TreeGrafter"/>
</dbReference>
<dbReference type="GO" id="GO:0006412">
    <property type="term" value="P:translation"/>
    <property type="evidence" value="ECO:0007669"/>
    <property type="project" value="UniProtKB-UniRule"/>
</dbReference>
<dbReference type="FunFam" id="1.10.10.410:FF:000001">
    <property type="entry name" value="Aspartyl/glutamyl-tRNA(Asn/Gln) amidotransferase subunit B"/>
    <property type="match status" value="1"/>
</dbReference>
<dbReference type="Gene3D" id="1.10.10.410">
    <property type="match status" value="1"/>
</dbReference>
<dbReference type="Gene3D" id="1.10.150.380">
    <property type="entry name" value="GatB domain, N-terminal subdomain"/>
    <property type="match status" value="1"/>
</dbReference>
<dbReference type="HAMAP" id="MF_00121">
    <property type="entry name" value="GatB"/>
    <property type="match status" value="1"/>
</dbReference>
<dbReference type="InterPro" id="IPR017959">
    <property type="entry name" value="Asn/Gln-tRNA_amidoTrfase_suB/E"/>
</dbReference>
<dbReference type="InterPro" id="IPR006075">
    <property type="entry name" value="Asn/Gln-tRNA_Trfase_suB/E_cat"/>
</dbReference>
<dbReference type="InterPro" id="IPR018027">
    <property type="entry name" value="Asn/Gln_amidotransferase"/>
</dbReference>
<dbReference type="InterPro" id="IPR003789">
    <property type="entry name" value="Asn/Gln_tRNA_amidoTrase-B-like"/>
</dbReference>
<dbReference type="InterPro" id="IPR004413">
    <property type="entry name" value="GatB"/>
</dbReference>
<dbReference type="InterPro" id="IPR042114">
    <property type="entry name" value="GatB_C_1"/>
</dbReference>
<dbReference type="InterPro" id="IPR023168">
    <property type="entry name" value="GatB_Yqey_C_2"/>
</dbReference>
<dbReference type="InterPro" id="IPR017958">
    <property type="entry name" value="Gln-tRNA_amidoTrfase_suB_CS"/>
</dbReference>
<dbReference type="InterPro" id="IPR014746">
    <property type="entry name" value="Gln_synth/guanido_kin_cat_dom"/>
</dbReference>
<dbReference type="NCBIfam" id="TIGR00133">
    <property type="entry name" value="gatB"/>
    <property type="match status" value="1"/>
</dbReference>
<dbReference type="NCBIfam" id="NF004012">
    <property type="entry name" value="PRK05477.1-2"/>
    <property type="match status" value="1"/>
</dbReference>
<dbReference type="NCBIfam" id="NF004014">
    <property type="entry name" value="PRK05477.1-4"/>
    <property type="match status" value="1"/>
</dbReference>
<dbReference type="NCBIfam" id="NF004015">
    <property type="entry name" value="PRK05477.1-5"/>
    <property type="match status" value="1"/>
</dbReference>
<dbReference type="PANTHER" id="PTHR11659">
    <property type="entry name" value="GLUTAMYL-TRNA GLN AMIDOTRANSFERASE SUBUNIT B MITOCHONDRIAL AND PROKARYOTIC PET112-RELATED"/>
    <property type="match status" value="1"/>
</dbReference>
<dbReference type="PANTHER" id="PTHR11659:SF0">
    <property type="entry name" value="GLUTAMYL-TRNA(GLN) AMIDOTRANSFERASE SUBUNIT B, MITOCHONDRIAL"/>
    <property type="match status" value="1"/>
</dbReference>
<dbReference type="Pfam" id="PF02934">
    <property type="entry name" value="GatB_N"/>
    <property type="match status" value="1"/>
</dbReference>
<dbReference type="Pfam" id="PF02637">
    <property type="entry name" value="GatB_Yqey"/>
    <property type="match status" value="1"/>
</dbReference>
<dbReference type="SMART" id="SM00845">
    <property type="entry name" value="GatB_Yqey"/>
    <property type="match status" value="1"/>
</dbReference>
<dbReference type="SUPFAM" id="SSF89095">
    <property type="entry name" value="GatB/YqeY motif"/>
    <property type="match status" value="1"/>
</dbReference>
<dbReference type="SUPFAM" id="SSF55931">
    <property type="entry name" value="Glutamine synthetase/guanido kinase"/>
    <property type="match status" value="1"/>
</dbReference>
<dbReference type="PROSITE" id="PS01234">
    <property type="entry name" value="GATB"/>
    <property type="match status" value="1"/>
</dbReference>
<organism>
    <name type="scientific">Rickettsia rickettsii (strain Iowa)</name>
    <dbReference type="NCBI Taxonomy" id="452659"/>
    <lineage>
        <taxon>Bacteria</taxon>
        <taxon>Pseudomonadati</taxon>
        <taxon>Pseudomonadota</taxon>
        <taxon>Alphaproteobacteria</taxon>
        <taxon>Rickettsiales</taxon>
        <taxon>Rickettsiaceae</taxon>
        <taxon>Rickettsieae</taxon>
        <taxon>Rickettsia</taxon>
        <taxon>spotted fever group</taxon>
    </lineage>
</organism>
<sequence length="483" mass="54149">MAYIEGNTGKWEYVIGLEIHAQISSKSKLFSGSSTIFAANPNSQVSYVDAAMPGMLPVLNKHCVHQAIKTGLGLKAKINKYSVFDRKNYFYADLPQGYQISQFYYPIVQNGTMEIPTSTGDLKTIRINRLHLEQDAGKSMHDQSPHYSFIDLNRAGIGLMEIVTEPDISSPEEAAEFVKKLRNLLRYIGSCDGDMEKGSMRCDANISVRRSGEPLGTRCEIKNINSIRNIIKAIEFEAKRQVDLLESGEEIIQETRLFNADSGETRTMRLKEEALDYRYFPDPDLLPLVISDELINELKANLPELPDQKIEKYTKEFSLSKYDAEVIVADESVAEYFEKAANECNPKMLTNWLTSELFGQLNKASIGINECKITPSNFAKLVKLIENDTISGKIAKTVFEIMFETGKAPDKIIEEKGLVQVSDNNVLNTVIDEVIAENPESVEGYRSGKDKLFGFFVGQVMKKTDGKANPTLVNQLLKEKLSS</sequence>
<proteinExistence type="inferred from homology"/>
<comment type="function">
    <text evidence="1">Allows the formation of correctly charged Asn-tRNA(Asn) or Gln-tRNA(Gln) through the transamidation of misacylated Asp-tRNA(Asn) or Glu-tRNA(Gln) in organisms which lack either or both of asparaginyl-tRNA or glutaminyl-tRNA synthetases. The reaction takes place in the presence of glutamine and ATP through an activated phospho-Asp-tRNA(Asn) or phospho-Glu-tRNA(Gln).</text>
</comment>
<comment type="catalytic activity">
    <reaction evidence="1">
        <text>L-glutamyl-tRNA(Gln) + L-glutamine + ATP + H2O = L-glutaminyl-tRNA(Gln) + L-glutamate + ADP + phosphate + H(+)</text>
        <dbReference type="Rhea" id="RHEA:17521"/>
        <dbReference type="Rhea" id="RHEA-COMP:9681"/>
        <dbReference type="Rhea" id="RHEA-COMP:9684"/>
        <dbReference type="ChEBI" id="CHEBI:15377"/>
        <dbReference type="ChEBI" id="CHEBI:15378"/>
        <dbReference type="ChEBI" id="CHEBI:29985"/>
        <dbReference type="ChEBI" id="CHEBI:30616"/>
        <dbReference type="ChEBI" id="CHEBI:43474"/>
        <dbReference type="ChEBI" id="CHEBI:58359"/>
        <dbReference type="ChEBI" id="CHEBI:78520"/>
        <dbReference type="ChEBI" id="CHEBI:78521"/>
        <dbReference type="ChEBI" id="CHEBI:456216"/>
    </reaction>
</comment>
<comment type="catalytic activity">
    <reaction evidence="1">
        <text>L-aspartyl-tRNA(Asn) + L-glutamine + ATP + H2O = L-asparaginyl-tRNA(Asn) + L-glutamate + ADP + phosphate + 2 H(+)</text>
        <dbReference type="Rhea" id="RHEA:14513"/>
        <dbReference type="Rhea" id="RHEA-COMP:9674"/>
        <dbReference type="Rhea" id="RHEA-COMP:9677"/>
        <dbReference type="ChEBI" id="CHEBI:15377"/>
        <dbReference type="ChEBI" id="CHEBI:15378"/>
        <dbReference type="ChEBI" id="CHEBI:29985"/>
        <dbReference type="ChEBI" id="CHEBI:30616"/>
        <dbReference type="ChEBI" id="CHEBI:43474"/>
        <dbReference type="ChEBI" id="CHEBI:58359"/>
        <dbReference type="ChEBI" id="CHEBI:78515"/>
        <dbReference type="ChEBI" id="CHEBI:78516"/>
        <dbReference type="ChEBI" id="CHEBI:456216"/>
    </reaction>
</comment>
<comment type="subunit">
    <text evidence="1">Heterotrimer of A, B and C subunits.</text>
</comment>
<comment type="similarity">
    <text evidence="1">Belongs to the GatB/GatE family. GatB subfamily.</text>
</comment>
<gene>
    <name evidence="1" type="primary">gatB</name>
    <name type="ordered locus">RrIowa_0236</name>
</gene>
<keyword id="KW-0067">ATP-binding</keyword>
<keyword id="KW-0436">Ligase</keyword>
<keyword id="KW-0547">Nucleotide-binding</keyword>
<keyword id="KW-0648">Protein biosynthesis</keyword>
<name>GATB_RICRO</name>